<protein>
    <recommendedName>
        <fullName evidence="1">Phosphoglycerate kinase</fullName>
        <ecNumber evidence="1">2.7.2.3</ecNumber>
    </recommendedName>
</protein>
<dbReference type="EC" id="2.7.2.3" evidence="1"/>
<dbReference type="EMBL" id="AL596172">
    <property type="protein sequence ID" value="CAC97779.1"/>
    <property type="molecule type" value="Genomic_DNA"/>
</dbReference>
<dbReference type="PIR" id="AC1751">
    <property type="entry name" value="AC1751"/>
</dbReference>
<dbReference type="RefSeq" id="WP_003772388.1">
    <property type="nucleotide sequence ID" value="NC_003212.1"/>
</dbReference>
<dbReference type="SMR" id="Q928I0"/>
<dbReference type="STRING" id="272626.gene:17566932"/>
<dbReference type="GeneID" id="93235864"/>
<dbReference type="KEGG" id="lin:pgk"/>
<dbReference type="eggNOG" id="COG0126">
    <property type="taxonomic scope" value="Bacteria"/>
</dbReference>
<dbReference type="HOGENOM" id="CLU_025427_0_2_9"/>
<dbReference type="OrthoDB" id="9808460at2"/>
<dbReference type="UniPathway" id="UPA00109">
    <property type="reaction ID" value="UER00185"/>
</dbReference>
<dbReference type="Proteomes" id="UP000002513">
    <property type="component" value="Chromosome"/>
</dbReference>
<dbReference type="GO" id="GO:0005829">
    <property type="term" value="C:cytosol"/>
    <property type="evidence" value="ECO:0007669"/>
    <property type="project" value="TreeGrafter"/>
</dbReference>
<dbReference type="GO" id="GO:0043531">
    <property type="term" value="F:ADP binding"/>
    <property type="evidence" value="ECO:0007669"/>
    <property type="project" value="TreeGrafter"/>
</dbReference>
<dbReference type="GO" id="GO:0005524">
    <property type="term" value="F:ATP binding"/>
    <property type="evidence" value="ECO:0007669"/>
    <property type="project" value="UniProtKB-KW"/>
</dbReference>
<dbReference type="GO" id="GO:0004618">
    <property type="term" value="F:phosphoglycerate kinase activity"/>
    <property type="evidence" value="ECO:0007669"/>
    <property type="project" value="UniProtKB-UniRule"/>
</dbReference>
<dbReference type="GO" id="GO:0006094">
    <property type="term" value="P:gluconeogenesis"/>
    <property type="evidence" value="ECO:0007669"/>
    <property type="project" value="TreeGrafter"/>
</dbReference>
<dbReference type="GO" id="GO:0006096">
    <property type="term" value="P:glycolytic process"/>
    <property type="evidence" value="ECO:0007669"/>
    <property type="project" value="UniProtKB-UniRule"/>
</dbReference>
<dbReference type="CDD" id="cd00318">
    <property type="entry name" value="Phosphoglycerate_kinase"/>
    <property type="match status" value="1"/>
</dbReference>
<dbReference type="FunFam" id="3.40.50.1260:FF:000001">
    <property type="entry name" value="Phosphoglycerate kinase"/>
    <property type="match status" value="1"/>
</dbReference>
<dbReference type="FunFam" id="3.40.50.1260:FF:000008">
    <property type="entry name" value="Phosphoglycerate kinase"/>
    <property type="match status" value="1"/>
</dbReference>
<dbReference type="Gene3D" id="3.40.50.1260">
    <property type="entry name" value="Phosphoglycerate kinase, N-terminal domain"/>
    <property type="match status" value="2"/>
</dbReference>
<dbReference type="HAMAP" id="MF_00145">
    <property type="entry name" value="Phosphoglyc_kinase"/>
    <property type="match status" value="1"/>
</dbReference>
<dbReference type="InterPro" id="IPR001576">
    <property type="entry name" value="Phosphoglycerate_kinase"/>
</dbReference>
<dbReference type="InterPro" id="IPR015911">
    <property type="entry name" value="Phosphoglycerate_kinase_CS"/>
</dbReference>
<dbReference type="InterPro" id="IPR015824">
    <property type="entry name" value="Phosphoglycerate_kinase_N"/>
</dbReference>
<dbReference type="InterPro" id="IPR036043">
    <property type="entry name" value="Phosphoglycerate_kinase_sf"/>
</dbReference>
<dbReference type="PANTHER" id="PTHR11406">
    <property type="entry name" value="PHOSPHOGLYCERATE KINASE"/>
    <property type="match status" value="1"/>
</dbReference>
<dbReference type="PANTHER" id="PTHR11406:SF23">
    <property type="entry name" value="PHOSPHOGLYCERATE KINASE 1, CHLOROPLASTIC-RELATED"/>
    <property type="match status" value="1"/>
</dbReference>
<dbReference type="Pfam" id="PF00162">
    <property type="entry name" value="PGK"/>
    <property type="match status" value="1"/>
</dbReference>
<dbReference type="PIRSF" id="PIRSF000724">
    <property type="entry name" value="Pgk"/>
    <property type="match status" value="1"/>
</dbReference>
<dbReference type="PRINTS" id="PR00477">
    <property type="entry name" value="PHGLYCKINASE"/>
</dbReference>
<dbReference type="SUPFAM" id="SSF53748">
    <property type="entry name" value="Phosphoglycerate kinase"/>
    <property type="match status" value="1"/>
</dbReference>
<dbReference type="PROSITE" id="PS00111">
    <property type="entry name" value="PGLYCERATE_KINASE"/>
    <property type="match status" value="1"/>
</dbReference>
<name>PGK_LISIN</name>
<gene>
    <name evidence="1" type="primary">pgk</name>
    <name type="ordered locus">lin2552</name>
</gene>
<proteinExistence type="inferred from homology"/>
<comment type="catalytic activity">
    <reaction evidence="1">
        <text>(2R)-3-phosphoglycerate + ATP = (2R)-3-phospho-glyceroyl phosphate + ADP</text>
        <dbReference type="Rhea" id="RHEA:14801"/>
        <dbReference type="ChEBI" id="CHEBI:30616"/>
        <dbReference type="ChEBI" id="CHEBI:57604"/>
        <dbReference type="ChEBI" id="CHEBI:58272"/>
        <dbReference type="ChEBI" id="CHEBI:456216"/>
        <dbReference type="EC" id="2.7.2.3"/>
    </reaction>
</comment>
<comment type="pathway">
    <text evidence="1">Carbohydrate degradation; glycolysis; pyruvate from D-glyceraldehyde 3-phosphate: step 2/5.</text>
</comment>
<comment type="subunit">
    <text evidence="1">Monomer.</text>
</comment>
<comment type="subcellular location">
    <subcellularLocation>
        <location evidence="1">Cytoplasm</location>
    </subcellularLocation>
</comment>
<comment type="similarity">
    <text evidence="1">Belongs to the phosphoglycerate kinase family.</text>
</comment>
<feature type="chain" id="PRO_0000145960" description="Phosphoglycerate kinase">
    <location>
        <begin position="1"/>
        <end position="396"/>
    </location>
</feature>
<feature type="binding site" evidence="1">
    <location>
        <begin position="21"/>
        <end position="23"/>
    </location>
    <ligand>
        <name>substrate</name>
    </ligand>
</feature>
<feature type="binding site" evidence="1">
    <location>
        <position position="36"/>
    </location>
    <ligand>
        <name>substrate</name>
    </ligand>
</feature>
<feature type="binding site" evidence="1">
    <location>
        <begin position="59"/>
        <end position="62"/>
    </location>
    <ligand>
        <name>substrate</name>
    </ligand>
</feature>
<feature type="binding site" evidence="1">
    <location>
        <position position="119"/>
    </location>
    <ligand>
        <name>substrate</name>
    </ligand>
</feature>
<feature type="binding site" evidence="1">
    <location>
        <position position="156"/>
    </location>
    <ligand>
        <name>substrate</name>
    </ligand>
</feature>
<feature type="binding site" evidence="1">
    <location>
        <position position="206"/>
    </location>
    <ligand>
        <name>ATP</name>
        <dbReference type="ChEBI" id="CHEBI:30616"/>
    </ligand>
</feature>
<feature type="binding site" evidence="1">
    <location>
        <position position="294"/>
    </location>
    <ligand>
        <name>ATP</name>
        <dbReference type="ChEBI" id="CHEBI:30616"/>
    </ligand>
</feature>
<feature type="binding site" evidence="1">
    <location>
        <position position="325"/>
    </location>
    <ligand>
        <name>ATP</name>
        <dbReference type="ChEBI" id="CHEBI:30616"/>
    </ligand>
</feature>
<feature type="binding site" evidence="1">
    <location>
        <begin position="352"/>
        <end position="355"/>
    </location>
    <ligand>
        <name>ATP</name>
        <dbReference type="ChEBI" id="CHEBI:30616"/>
    </ligand>
</feature>
<keyword id="KW-0067">ATP-binding</keyword>
<keyword id="KW-0963">Cytoplasm</keyword>
<keyword id="KW-0324">Glycolysis</keyword>
<keyword id="KW-0418">Kinase</keyword>
<keyword id="KW-0547">Nucleotide-binding</keyword>
<keyword id="KW-0808">Transferase</keyword>
<organism>
    <name type="scientific">Listeria innocua serovar 6a (strain ATCC BAA-680 / CLIP 11262)</name>
    <dbReference type="NCBI Taxonomy" id="272626"/>
    <lineage>
        <taxon>Bacteria</taxon>
        <taxon>Bacillati</taxon>
        <taxon>Bacillota</taxon>
        <taxon>Bacilli</taxon>
        <taxon>Bacillales</taxon>
        <taxon>Listeriaceae</taxon>
        <taxon>Listeria</taxon>
    </lineage>
</organism>
<reference key="1">
    <citation type="journal article" date="2001" name="Science">
        <title>Comparative genomics of Listeria species.</title>
        <authorList>
            <person name="Glaser P."/>
            <person name="Frangeul L."/>
            <person name="Buchrieser C."/>
            <person name="Rusniok C."/>
            <person name="Amend A."/>
            <person name="Baquero F."/>
            <person name="Berche P."/>
            <person name="Bloecker H."/>
            <person name="Brandt P."/>
            <person name="Chakraborty T."/>
            <person name="Charbit A."/>
            <person name="Chetouani F."/>
            <person name="Couve E."/>
            <person name="de Daruvar A."/>
            <person name="Dehoux P."/>
            <person name="Domann E."/>
            <person name="Dominguez-Bernal G."/>
            <person name="Duchaud E."/>
            <person name="Durant L."/>
            <person name="Dussurget O."/>
            <person name="Entian K.-D."/>
            <person name="Fsihi H."/>
            <person name="Garcia-del Portillo F."/>
            <person name="Garrido P."/>
            <person name="Gautier L."/>
            <person name="Goebel W."/>
            <person name="Gomez-Lopez N."/>
            <person name="Hain T."/>
            <person name="Hauf J."/>
            <person name="Jackson D."/>
            <person name="Jones L.-M."/>
            <person name="Kaerst U."/>
            <person name="Kreft J."/>
            <person name="Kuhn M."/>
            <person name="Kunst F."/>
            <person name="Kurapkat G."/>
            <person name="Madueno E."/>
            <person name="Maitournam A."/>
            <person name="Mata Vicente J."/>
            <person name="Ng E."/>
            <person name="Nedjari H."/>
            <person name="Nordsiek G."/>
            <person name="Novella S."/>
            <person name="de Pablos B."/>
            <person name="Perez-Diaz J.-C."/>
            <person name="Purcell R."/>
            <person name="Remmel B."/>
            <person name="Rose M."/>
            <person name="Schlueter T."/>
            <person name="Simoes N."/>
            <person name="Tierrez A."/>
            <person name="Vazquez-Boland J.-A."/>
            <person name="Voss H."/>
            <person name="Wehland J."/>
            <person name="Cossart P."/>
        </authorList>
    </citation>
    <scope>NUCLEOTIDE SEQUENCE [LARGE SCALE GENOMIC DNA]</scope>
    <source>
        <strain>ATCC BAA-680 / CLIP 11262</strain>
    </source>
</reference>
<sequence length="396" mass="42061">MAKKVVTDLDLKNKKVLVRVDFNVPMKDGKITNDNRIVAALPTIEYILEQNGKAILFSHLGKVKTEEDKEGKSLRPVAARLSELLGKEVKFVPTTRGPELEKAVDELKDGEVLLFENTRFEDIDGKKESKNDPELGKYWASLGDVFVNDAFGTAHRAHASNVGIASNLESAAGFLMEKEIKFIGGVVDNPARPLVAILGGAKVSDKIGVIENLLTKADKVLVGGGMTFTFMAAQGQEIGKSLLEADKVELAKGLLEKAGDKLVLPVDAVVSKEFSNDAPFHTVSADSIPADEMGLDIGQATIDLFTKELQGAKTVVWNGPMGVFELSNFAKGTIGVCEAIANLTDATTIIGGGDSAAAAMDLGFADKFTHISTGGGASLEYLEGKELPGVASISDK</sequence>
<accession>Q928I0</accession>
<evidence type="ECO:0000255" key="1">
    <source>
        <dbReference type="HAMAP-Rule" id="MF_00145"/>
    </source>
</evidence>